<feature type="chain" id="PRO_0000117689" description="NADH-quinone oxidoreductase subunit N">
    <location>
        <begin position="1"/>
        <end position="485"/>
    </location>
</feature>
<feature type="transmembrane region" description="Helical" evidence="1">
    <location>
        <begin position="8"/>
        <end position="28"/>
    </location>
</feature>
<feature type="transmembrane region" description="Helical" evidence="1">
    <location>
        <begin position="35"/>
        <end position="55"/>
    </location>
</feature>
<feature type="transmembrane region" description="Helical" evidence="1">
    <location>
        <begin position="71"/>
        <end position="91"/>
    </location>
</feature>
<feature type="transmembrane region" description="Helical" evidence="1">
    <location>
        <begin position="105"/>
        <end position="125"/>
    </location>
</feature>
<feature type="transmembrane region" description="Helical" evidence="1">
    <location>
        <begin position="127"/>
        <end position="147"/>
    </location>
</feature>
<feature type="transmembrane region" description="Helical" evidence="1">
    <location>
        <begin position="159"/>
        <end position="179"/>
    </location>
</feature>
<feature type="transmembrane region" description="Helical" evidence="1">
    <location>
        <begin position="203"/>
        <end position="223"/>
    </location>
</feature>
<feature type="transmembrane region" description="Helical" evidence="1">
    <location>
        <begin position="235"/>
        <end position="255"/>
    </location>
</feature>
<feature type="transmembrane region" description="Helical" evidence="1">
    <location>
        <begin position="271"/>
        <end position="291"/>
    </location>
</feature>
<feature type="transmembrane region" description="Helical" evidence="1">
    <location>
        <begin position="297"/>
        <end position="317"/>
    </location>
</feature>
<feature type="transmembrane region" description="Helical" evidence="1">
    <location>
        <begin position="326"/>
        <end position="346"/>
    </location>
</feature>
<feature type="transmembrane region" description="Helical" evidence="1">
    <location>
        <begin position="373"/>
        <end position="393"/>
    </location>
</feature>
<feature type="transmembrane region" description="Helical" evidence="1">
    <location>
        <begin position="408"/>
        <end position="430"/>
    </location>
</feature>
<feature type="transmembrane region" description="Helical" evidence="1">
    <location>
        <begin position="455"/>
        <end position="475"/>
    </location>
</feature>
<reference key="1">
    <citation type="journal article" date="2001" name="Nature">
        <title>Genome sequence of enterohaemorrhagic Escherichia coli O157:H7.</title>
        <authorList>
            <person name="Perna N.T."/>
            <person name="Plunkett G. III"/>
            <person name="Burland V."/>
            <person name="Mau B."/>
            <person name="Glasner J.D."/>
            <person name="Rose D.J."/>
            <person name="Mayhew G.F."/>
            <person name="Evans P.S."/>
            <person name="Gregor J."/>
            <person name="Kirkpatrick H.A."/>
            <person name="Posfai G."/>
            <person name="Hackett J."/>
            <person name="Klink S."/>
            <person name="Boutin A."/>
            <person name="Shao Y."/>
            <person name="Miller L."/>
            <person name="Grotbeck E.J."/>
            <person name="Davis N.W."/>
            <person name="Lim A."/>
            <person name="Dimalanta E.T."/>
            <person name="Potamousis K."/>
            <person name="Apodaca J."/>
            <person name="Anantharaman T.S."/>
            <person name="Lin J."/>
            <person name="Yen G."/>
            <person name="Schwartz D.C."/>
            <person name="Welch R.A."/>
            <person name="Blattner F.R."/>
        </authorList>
    </citation>
    <scope>NUCLEOTIDE SEQUENCE [LARGE SCALE GENOMIC DNA]</scope>
    <source>
        <strain>O157:H7 / EDL933 / ATCC 700927 / EHEC</strain>
    </source>
</reference>
<reference key="2">
    <citation type="journal article" date="2001" name="DNA Res.">
        <title>Complete genome sequence of enterohemorrhagic Escherichia coli O157:H7 and genomic comparison with a laboratory strain K-12.</title>
        <authorList>
            <person name="Hayashi T."/>
            <person name="Makino K."/>
            <person name="Ohnishi M."/>
            <person name="Kurokawa K."/>
            <person name="Ishii K."/>
            <person name="Yokoyama K."/>
            <person name="Han C.-G."/>
            <person name="Ohtsubo E."/>
            <person name="Nakayama K."/>
            <person name="Murata T."/>
            <person name="Tanaka M."/>
            <person name="Tobe T."/>
            <person name="Iida T."/>
            <person name="Takami H."/>
            <person name="Honda T."/>
            <person name="Sasakawa C."/>
            <person name="Ogasawara N."/>
            <person name="Yasunaga T."/>
            <person name="Kuhara S."/>
            <person name="Shiba T."/>
            <person name="Hattori M."/>
            <person name="Shinagawa H."/>
        </authorList>
    </citation>
    <scope>NUCLEOTIDE SEQUENCE [LARGE SCALE GENOMIC DNA]</scope>
    <source>
        <strain>O157:H7 / Sakai / RIMD 0509952 / EHEC</strain>
    </source>
</reference>
<organism>
    <name type="scientific">Escherichia coli O157:H7</name>
    <dbReference type="NCBI Taxonomy" id="83334"/>
    <lineage>
        <taxon>Bacteria</taxon>
        <taxon>Pseudomonadati</taxon>
        <taxon>Pseudomonadota</taxon>
        <taxon>Gammaproteobacteria</taxon>
        <taxon>Enterobacterales</taxon>
        <taxon>Enterobacteriaceae</taxon>
        <taxon>Escherichia</taxon>
    </lineage>
</organism>
<gene>
    <name evidence="1" type="primary">nuoN</name>
    <name type="ordered locus">Z3534</name>
    <name type="ordered locus">ECs3160</name>
</gene>
<evidence type="ECO:0000255" key="1">
    <source>
        <dbReference type="HAMAP-Rule" id="MF_00445"/>
    </source>
</evidence>
<evidence type="ECO:0000305" key="2"/>
<name>NUON_ECO57</name>
<accession>P0AFF1</accession>
<accession>P33608</accession>
<accession>P78281</accession>
<dbReference type="EC" id="7.1.1.-" evidence="1"/>
<dbReference type="EMBL" id="AE005174">
    <property type="protein sequence ID" value="AAG57405.1"/>
    <property type="status" value="ALT_INIT"/>
    <property type="molecule type" value="Genomic_DNA"/>
</dbReference>
<dbReference type="EMBL" id="BA000007">
    <property type="protein sequence ID" value="BAB36583.2"/>
    <property type="molecule type" value="Genomic_DNA"/>
</dbReference>
<dbReference type="PIR" id="H91023">
    <property type="entry name" value="H91023"/>
</dbReference>
<dbReference type="RefSeq" id="NP_311187.2">
    <property type="nucleotide sequence ID" value="NC_002695.1"/>
</dbReference>
<dbReference type="RefSeq" id="WP_000156701.1">
    <property type="nucleotide sequence ID" value="NZ_VOAI01000001.1"/>
</dbReference>
<dbReference type="SMR" id="P0AFF1"/>
<dbReference type="STRING" id="155864.Z3534"/>
<dbReference type="GeneID" id="75205678"/>
<dbReference type="GeneID" id="916868"/>
<dbReference type="KEGG" id="ece:Z3534"/>
<dbReference type="KEGG" id="ecs:ECs_3160"/>
<dbReference type="PATRIC" id="fig|386585.9.peg.3298"/>
<dbReference type="eggNOG" id="COG1007">
    <property type="taxonomic scope" value="Bacteria"/>
</dbReference>
<dbReference type="HOGENOM" id="CLU_007100_1_5_6"/>
<dbReference type="OMA" id="LMFFSEP"/>
<dbReference type="Proteomes" id="UP000000558">
    <property type="component" value="Chromosome"/>
</dbReference>
<dbReference type="Proteomes" id="UP000002519">
    <property type="component" value="Chromosome"/>
</dbReference>
<dbReference type="GO" id="GO:0005886">
    <property type="term" value="C:plasma membrane"/>
    <property type="evidence" value="ECO:0007669"/>
    <property type="project" value="UniProtKB-SubCell"/>
</dbReference>
<dbReference type="GO" id="GO:0008137">
    <property type="term" value="F:NADH dehydrogenase (ubiquinone) activity"/>
    <property type="evidence" value="ECO:0007669"/>
    <property type="project" value="InterPro"/>
</dbReference>
<dbReference type="GO" id="GO:0050136">
    <property type="term" value="F:NADH:ubiquinone reductase (non-electrogenic) activity"/>
    <property type="evidence" value="ECO:0007669"/>
    <property type="project" value="UniProtKB-UniRule"/>
</dbReference>
<dbReference type="GO" id="GO:0048038">
    <property type="term" value="F:quinone binding"/>
    <property type="evidence" value="ECO:0007669"/>
    <property type="project" value="UniProtKB-KW"/>
</dbReference>
<dbReference type="GO" id="GO:0042773">
    <property type="term" value="P:ATP synthesis coupled electron transport"/>
    <property type="evidence" value="ECO:0007669"/>
    <property type="project" value="InterPro"/>
</dbReference>
<dbReference type="HAMAP" id="MF_00445">
    <property type="entry name" value="NDH1_NuoN_1"/>
    <property type="match status" value="1"/>
</dbReference>
<dbReference type="InterPro" id="IPR010096">
    <property type="entry name" value="NADH-Q_OxRdtase_suN/2"/>
</dbReference>
<dbReference type="InterPro" id="IPR001750">
    <property type="entry name" value="ND/Mrp_TM"/>
</dbReference>
<dbReference type="NCBIfam" id="TIGR01770">
    <property type="entry name" value="NDH_I_N"/>
    <property type="match status" value="1"/>
</dbReference>
<dbReference type="NCBIfam" id="NF004439">
    <property type="entry name" value="PRK05777.1-1"/>
    <property type="match status" value="1"/>
</dbReference>
<dbReference type="PANTHER" id="PTHR22773">
    <property type="entry name" value="NADH DEHYDROGENASE"/>
    <property type="match status" value="1"/>
</dbReference>
<dbReference type="Pfam" id="PF00361">
    <property type="entry name" value="Proton_antipo_M"/>
    <property type="match status" value="1"/>
</dbReference>
<keyword id="KW-0997">Cell inner membrane</keyword>
<keyword id="KW-1003">Cell membrane</keyword>
<keyword id="KW-0472">Membrane</keyword>
<keyword id="KW-0520">NAD</keyword>
<keyword id="KW-0874">Quinone</keyword>
<keyword id="KW-1185">Reference proteome</keyword>
<keyword id="KW-1278">Translocase</keyword>
<keyword id="KW-0812">Transmembrane</keyword>
<keyword id="KW-1133">Transmembrane helix</keyword>
<keyword id="KW-0813">Transport</keyword>
<keyword id="KW-0830">Ubiquinone</keyword>
<proteinExistence type="inferred from homology"/>
<protein>
    <recommendedName>
        <fullName evidence="1">NADH-quinone oxidoreductase subunit N</fullName>
        <ecNumber evidence="1">7.1.1.-</ecNumber>
    </recommendedName>
    <alternativeName>
        <fullName evidence="1">NADH dehydrogenase I subunit N</fullName>
    </alternativeName>
    <alternativeName>
        <fullName evidence="1">NDH-1 subunit N</fullName>
    </alternativeName>
</protein>
<sequence>MTITPQNLIALLPLLIVGLTVVVVMLSIAWRRNHFLNATLSVIGLNAALVSLWFVGQAGAMDVTPLMRVDGFAMLYTGLVLLASLATCTFAYPWLEGYNDNKDEFYLLVLIAALGGILLANANHLASLFLGIELISLPLFGLVGYAFRQKRSLEASIKYTILSAAASSFLLFGMALVYAQSGDLSFVALGKNLGDGMLNEPLLLAGFGLMIVGLGFKLSLVPFHLWTPDVYQGAPAPVSTFLATASKIAIFGVVMRLFLYAPVGDSEAIRVVLAIIAFASIIFGNLMALSQTNIKRLLGYSSISHLGYLLVALIALQTGEMSMEAVGVYLAGYLFSSLGAFGVVSLMSSPYRGPDADSLFSYRGLFWHRPILAAVMTVMMLSLAGIPMTLGFIGKFYVLAVGVQAHLWWLVGAVVVGSAIGLYYYLRVAVSLYLHAPEQPGRDAPSNWQYSAGGIVVLISALLVLVLGVWPQPLISIVRLAMPLM</sequence>
<comment type="function">
    <text evidence="1">NDH-1 shuttles electrons from NADH, via FMN and iron-sulfur (Fe-S) centers, to quinones in the respiratory chain. The immediate electron acceptor for the enzyme in this species is believed to be ubiquinone. Couples the redox reaction to proton translocation (for every two electrons transferred, four hydrogen ions are translocated across the cytoplasmic membrane), and thus conserves the redox energy in a proton gradient.</text>
</comment>
<comment type="catalytic activity">
    <reaction evidence="1">
        <text>a quinone + NADH + 5 H(+)(in) = a quinol + NAD(+) + 4 H(+)(out)</text>
        <dbReference type="Rhea" id="RHEA:57888"/>
        <dbReference type="ChEBI" id="CHEBI:15378"/>
        <dbReference type="ChEBI" id="CHEBI:24646"/>
        <dbReference type="ChEBI" id="CHEBI:57540"/>
        <dbReference type="ChEBI" id="CHEBI:57945"/>
        <dbReference type="ChEBI" id="CHEBI:132124"/>
    </reaction>
</comment>
<comment type="subunit">
    <text evidence="1">NDH-1 is composed of 13 different subunits. Subunits NuoA, H, J, K, L, M, N constitute the membrane sector of the complex.</text>
</comment>
<comment type="subcellular location">
    <subcellularLocation>
        <location evidence="1">Cell inner membrane</location>
        <topology evidence="1">Multi-pass membrane protein</topology>
    </subcellularLocation>
</comment>
<comment type="similarity">
    <text evidence="1">Belongs to the complex I subunit 2 family.</text>
</comment>
<comment type="sequence caution" evidence="2">
    <conflict type="erroneous initiation">
        <sequence resource="EMBL-CDS" id="AAG57405"/>
    </conflict>
    <text>Truncated N-terminus.</text>
</comment>